<name>IF122_CAEEL</name>
<comment type="function">
    <text evidence="3 4 5 6 7 8">Component of the IFT complex A (IFT-A), a complex required for retrograde ciliary transport and entry into cilia of G protein-coupled receptors (GPCRs) (PubMed:28479320). Plays a role in chemotaxis and sensory perception (PubMed:7240452, PubMed:7705621). Required for entry into and exit from the dauer larval stage and this may be mediated by daf-12, daf-16 and daf-41 (PubMed:23284299, PubMed:25830239, PubMed:7240452). Controls the behavioral response, namely the avoidance response, and pathogen-responsive gene expression in the response to pathogenic bacteria such as E.coli and P.aeruginosa (PubMed:23284299).</text>
</comment>
<comment type="subunit">
    <text evidence="6">Component of the IFT complex A (IFT-A) composed of at least che-11, daf-10, dyf-2, ift-139, ift-43 and ifta-1.</text>
</comment>
<comment type="subcellular location">
    <subcellularLocation>
        <location evidence="10">Cell projection</location>
        <location evidence="10">Cilium</location>
    </subcellularLocation>
    <text evidence="3">Shuttles at the same rate as intraflagellar transport (IFT) complex B proteins such as osm-1, osm-5 and osm-6 along the cilia of the amphid and phasmid sensory neurons.</text>
</comment>
<comment type="disruption phenotype">
    <text evidence="8">Sterile. Defective chemotaxis with 86% of mutants exhibiting reduced tracking to the chemoattractant ammonium chloride.</text>
</comment>
<organism evidence="12">
    <name type="scientific">Caenorhabditis elegans</name>
    <dbReference type="NCBI Taxonomy" id="6239"/>
    <lineage>
        <taxon>Eukaryota</taxon>
        <taxon>Metazoa</taxon>
        <taxon>Ecdysozoa</taxon>
        <taxon>Nematoda</taxon>
        <taxon>Chromadorea</taxon>
        <taxon>Rhabditida</taxon>
        <taxon>Rhabditina</taxon>
        <taxon>Rhabditomorpha</taxon>
        <taxon>Rhabditoidea</taxon>
        <taxon>Rhabditidae</taxon>
        <taxon>Peloderinae</taxon>
        <taxon>Caenorhabditis</taxon>
    </lineage>
</organism>
<reference evidence="11" key="1">
    <citation type="journal article" date="2006" name="Genetics">
        <title>The molecular identities of the Caenorhabditis elegans intraflagellar transport genes dyf-6, daf-10 and osm-1.</title>
        <authorList>
            <person name="Bell L.R."/>
            <person name="Stone S."/>
            <person name="Yochem J."/>
            <person name="Shaw J.E."/>
            <person name="Herman R.K."/>
        </authorList>
    </citation>
    <scope>NUCLEOTIDE SEQUENCE [MRNA]</scope>
</reference>
<reference evidence="12" key="2">
    <citation type="journal article" date="1998" name="Science">
        <title>Genome sequence of the nematode C. elegans: a platform for investigating biology.</title>
        <authorList>
            <consortium name="The C. elegans sequencing consortium"/>
        </authorList>
    </citation>
    <scope>NUCLEOTIDE SEQUENCE [LARGE SCALE GENOMIC DNA]</scope>
    <source>
        <strain evidence="12">Bristol N2</strain>
    </source>
</reference>
<reference evidence="9" key="3">
    <citation type="journal article" date="1981" name="J. Comp. Neurol.">
        <title>Sensory control of dauer larva formation in Caenorhabditis elegans.</title>
        <authorList>
            <person name="Albert P.S."/>
            <person name="Brown S.J."/>
            <person name="Riddle D.L."/>
        </authorList>
    </citation>
    <scope>FUNCTION</scope>
</reference>
<reference evidence="9" key="4">
    <citation type="journal article" date="1995" name="Genetics">
        <title>Mutations affecting the chemosensory neurons of Caenorhabditis elegans.</title>
        <authorList>
            <person name="Starich T.A."/>
            <person name="Herman R.K."/>
            <person name="Kari C.K."/>
            <person name="Yeh W.H."/>
            <person name="Schackwitz W.S."/>
            <person name="Schuyler M.W."/>
            <person name="Collet J."/>
            <person name="Thomas J.H."/>
            <person name="Riddle D.L."/>
        </authorList>
    </citation>
    <scope>FUNCTION</scope>
    <scope>DISRUPTION PHENOTYPE</scope>
</reference>
<reference evidence="9" key="5">
    <citation type="journal article" date="2001" name="Curr. Biol.">
        <title>An autosomal recessive polycystic kidney disease gene homolog is involved in intraflagellar transport in C. elegans ciliated sensory neurons.</title>
        <authorList>
            <person name="Qin H."/>
            <person name="Rosenbaum J.L."/>
            <person name="Barr M.M."/>
        </authorList>
    </citation>
    <scope>SUBCELLULAR LOCATION</scope>
</reference>
<reference evidence="9" key="6">
    <citation type="journal article" date="2012" name="PLoS Genet.">
        <title>Genes that act downstream of sensory neurons to influence longevity, dauer formation, and pathogen responses in Caenorhabditis elegans.</title>
        <authorList>
            <person name="Gaglia M.M."/>
            <person name="Jeong D.E."/>
            <person name="Ryu E.A."/>
            <person name="Lee D."/>
            <person name="Kenyon C."/>
            <person name="Lee S.J."/>
        </authorList>
    </citation>
    <scope>FUNCTION</scope>
</reference>
<reference evidence="9" key="7">
    <citation type="journal article" date="2015" name="PLoS Genet.">
        <title>Co-chaperone p23 regulates C. elegans lifespan in response to temperature.</title>
        <authorList>
            <person name="Horikawa M."/>
            <person name="Sural S."/>
            <person name="Hsu A.L."/>
            <person name="Antebi A."/>
        </authorList>
    </citation>
    <scope>FUNCTION</scope>
</reference>
<reference key="8">
    <citation type="journal article" date="2017" name="Curr. Biol.">
        <title>Dynein-driven retrograde intraflagellar transport is triphasic in C. elegans sensory cilia.</title>
        <authorList>
            <person name="Yi P."/>
            <person name="Li W.J."/>
            <person name="Dong M.Q."/>
            <person name="Ou G."/>
        </authorList>
    </citation>
    <scope>FUNCTION</scope>
    <scope>IDENTIFICATION IN IFT COMPLEX A</scope>
    <scope>IDENTIFICATION BY MASS SPECTROMETRY</scope>
</reference>
<proteinExistence type="evidence at protein level"/>
<dbReference type="EMBL" id="DQ360810">
    <property type="protein sequence ID" value="ABC88647.1"/>
    <property type="molecule type" value="mRNA"/>
</dbReference>
<dbReference type="EMBL" id="BX284604">
    <property type="protein sequence ID" value="CAB05177.4"/>
    <property type="molecule type" value="Genomic_DNA"/>
</dbReference>
<dbReference type="PIR" id="H88772">
    <property type="entry name" value="H88772"/>
</dbReference>
<dbReference type="PIR" id="T21306">
    <property type="entry name" value="T21306"/>
</dbReference>
<dbReference type="RefSeq" id="NP_501591.2">
    <property type="nucleotide sequence ID" value="NM_069190.4"/>
</dbReference>
<dbReference type="SMR" id="G5EFW7"/>
<dbReference type="ComplexPortal" id="CPX-1289">
    <property type="entry name" value="Intraflagellar transport complex A"/>
</dbReference>
<dbReference type="FunCoup" id="G5EFW7">
    <property type="interactions" value="1819"/>
</dbReference>
<dbReference type="STRING" id="6239.F23B2.4.1"/>
<dbReference type="PaxDb" id="6239-F23B2.4"/>
<dbReference type="EnsemblMetazoa" id="F23B2.4.1">
    <property type="protein sequence ID" value="F23B2.4.1"/>
    <property type="gene ID" value="WBGene00000906"/>
</dbReference>
<dbReference type="GeneID" id="184883"/>
<dbReference type="KEGG" id="cel:CELE_F23B2.4"/>
<dbReference type="AGR" id="WB:WBGene00000906"/>
<dbReference type="CTD" id="184883"/>
<dbReference type="WormBase" id="F23B2.4">
    <property type="protein sequence ID" value="CE40504"/>
    <property type="gene ID" value="WBGene00000906"/>
    <property type="gene designation" value="daf-10"/>
</dbReference>
<dbReference type="eggNOG" id="KOG1538">
    <property type="taxonomic scope" value="Eukaryota"/>
</dbReference>
<dbReference type="GeneTree" id="ENSGT00390000001016"/>
<dbReference type="HOGENOM" id="CLU_008896_0_0_1"/>
<dbReference type="InParanoid" id="G5EFW7"/>
<dbReference type="OMA" id="GDSFDTW"/>
<dbReference type="OrthoDB" id="10255582at2759"/>
<dbReference type="PhylomeDB" id="G5EFW7"/>
<dbReference type="Reactome" id="R-CEL-5610787">
    <property type="pathway name" value="Hedgehog 'off' state"/>
</dbReference>
<dbReference type="Reactome" id="R-CEL-5620924">
    <property type="pathway name" value="Intraflagellar transport"/>
</dbReference>
<dbReference type="PRO" id="PR:G5EFW7"/>
<dbReference type="Proteomes" id="UP000001940">
    <property type="component" value="Chromosome IV"/>
</dbReference>
<dbReference type="Bgee" id="WBGene00000906">
    <property type="expression patterns" value="Expressed in pharyngeal muscle cell (C elegans) and 3 other cell types or tissues"/>
</dbReference>
<dbReference type="GO" id="GO:0036064">
    <property type="term" value="C:ciliary basal body"/>
    <property type="evidence" value="ECO:0000314"/>
    <property type="project" value="UniProtKB"/>
</dbReference>
<dbReference type="GO" id="GO:0005929">
    <property type="term" value="C:cilium"/>
    <property type="evidence" value="ECO:0000303"/>
    <property type="project" value="ComplexPortal"/>
</dbReference>
<dbReference type="GO" id="GO:0030991">
    <property type="term" value="C:intraciliary transport particle A"/>
    <property type="evidence" value="ECO:0000250"/>
    <property type="project" value="UniProtKB"/>
</dbReference>
<dbReference type="GO" id="GO:0097730">
    <property type="term" value="C:non-motile cilium"/>
    <property type="evidence" value="ECO:0000318"/>
    <property type="project" value="GO_Central"/>
</dbReference>
<dbReference type="GO" id="GO:0006935">
    <property type="term" value="P:chemotaxis"/>
    <property type="evidence" value="ECO:0007669"/>
    <property type="project" value="UniProtKB-KW"/>
</dbReference>
<dbReference type="GO" id="GO:0060271">
    <property type="term" value="P:cilium assembly"/>
    <property type="evidence" value="ECO:0000316"/>
    <property type="project" value="UniProtKB"/>
</dbReference>
<dbReference type="GO" id="GO:0035721">
    <property type="term" value="P:intraciliary retrograde transport"/>
    <property type="evidence" value="ECO:0000318"/>
    <property type="project" value="GO_Central"/>
</dbReference>
<dbReference type="GO" id="GO:1905515">
    <property type="term" value="P:non-motile cilium assembly"/>
    <property type="evidence" value="ECO:0000315"/>
    <property type="project" value="WormBase"/>
</dbReference>
<dbReference type="GO" id="GO:0061066">
    <property type="term" value="P:positive regulation of dauer larval development"/>
    <property type="evidence" value="ECO:0000315"/>
    <property type="project" value="WormBase"/>
</dbReference>
<dbReference type="GO" id="GO:0061512">
    <property type="term" value="P:protein localization to cilium"/>
    <property type="evidence" value="ECO:0000318"/>
    <property type="project" value="GO_Central"/>
</dbReference>
<dbReference type="GO" id="GO:0097500">
    <property type="term" value="P:receptor localization to non-motile cilium"/>
    <property type="evidence" value="ECO:0000315"/>
    <property type="project" value="WormBase"/>
</dbReference>
<dbReference type="GO" id="GO:0061065">
    <property type="term" value="P:regulation of dauer larval development"/>
    <property type="evidence" value="ECO:0000316"/>
    <property type="project" value="UniProtKB"/>
</dbReference>
<dbReference type="GO" id="GO:0046626">
    <property type="term" value="P:regulation of insulin receptor signaling pathway"/>
    <property type="evidence" value="ECO:0000316"/>
    <property type="project" value="WormBase"/>
</dbReference>
<dbReference type="FunFam" id="1.25.40.470:FF:000037">
    <property type="entry name" value="Intraflagellar transport protein 122 homolog"/>
    <property type="match status" value="1"/>
</dbReference>
<dbReference type="Gene3D" id="1.25.40.470">
    <property type="match status" value="2"/>
</dbReference>
<dbReference type="Gene3D" id="2.130.10.10">
    <property type="entry name" value="YVTN repeat-like/Quinoprotein amine dehydrogenase"/>
    <property type="match status" value="2"/>
</dbReference>
<dbReference type="InterPro" id="IPR056153">
    <property type="entry name" value="Beta-prop_IFT122_1st"/>
</dbReference>
<dbReference type="InterPro" id="IPR056152">
    <property type="entry name" value="Beta-prop_IFT122_2nd"/>
</dbReference>
<dbReference type="InterPro" id="IPR039857">
    <property type="entry name" value="Ift122/121"/>
</dbReference>
<dbReference type="InterPro" id="IPR015943">
    <property type="entry name" value="WD40/YVTN_repeat-like_dom_sf"/>
</dbReference>
<dbReference type="InterPro" id="IPR036322">
    <property type="entry name" value="WD40_repeat_dom_sf"/>
</dbReference>
<dbReference type="InterPro" id="IPR001680">
    <property type="entry name" value="WD40_rpt"/>
</dbReference>
<dbReference type="InterPro" id="IPR056838">
    <property type="entry name" value="Zn_ribbon_IFT122"/>
</dbReference>
<dbReference type="PANTHER" id="PTHR12764:SF4">
    <property type="entry name" value="INTRAFLAGELLAR TRANSPORT PROTEIN 122 HOMOLOG"/>
    <property type="match status" value="1"/>
</dbReference>
<dbReference type="PANTHER" id="PTHR12764">
    <property type="entry name" value="WD REPEAT DOMAIN-RELATED"/>
    <property type="match status" value="1"/>
</dbReference>
<dbReference type="Pfam" id="PF23381">
    <property type="entry name" value="Beta-prop_IFT122_1st"/>
    <property type="match status" value="2"/>
</dbReference>
<dbReference type="Pfam" id="PF23377">
    <property type="entry name" value="Beta-prop_IFT122_2nd"/>
    <property type="match status" value="1"/>
</dbReference>
<dbReference type="Pfam" id="PF25295">
    <property type="entry name" value="TPR_IFT122"/>
    <property type="match status" value="1"/>
</dbReference>
<dbReference type="Pfam" id="PF25144">
    <property type="entry name" value="Zn_ribbon_IFT122"/>
    <property type="match status" value="1"/>
</dbReference>
<dbReference type="SMART" id="SM00320">
    <property type="entry name" value="WD40"/>
    <property type="match status" value="7"/>
</dbReference>
<dbReference type="SUPFAM" id="SSF50978">
    <property type="entry name" value="WD40 repeat-like"/>
    <property type="match status" value="2"/>
</dbReference>
<dbReference type="PROSITE" id="PS50082">
    <property type="entry name" value="WD_REPEATS_2"/>
    <property type="match status" value="1"/>
</dbReference>
<dbReference type="PROSITE" id="PS50294">
    <property type="entry name" value="WD_REPEATS_REGION"/>
    <property type="match status" value="1"/>
</dbReference>
<evidence type="ECO:0000250" key="1">
    <source>
        <dbReference type="UniProtKB" id="Q9HBG6"/>
    </source>
</evidence>
<evidence type="ECO:0000255" key="2"/>
<evidence type="ECO:0000269" key="3">
    <source>
    </source>
</evidence>
<evidence type="ECO:0000269" key="4">
    <source>
    </source>
</evidence>
<evidence type="ECO:0000269" key="5">
    <source>
    </source>
</evidence>
<evidence type="ECO:0000269" key="6">
    <source>
    </source>
</evidence>
<evidence type="ECO:0000269" key="7">
    <source>
    </source>
</evidence>
<evidence type="ECO:0000269" key="8">
    <source>
    </source>
</evidence>
<evidence type="ECO:0000305" key="9"/>
<evidence type="ECO:0000305" key="10">
    <source>
    </source>
</evidence>
<evidence type="ECO:0000312" key="11">
    <source>
        <dbReference type="EMBL" id="ABC88647.1"/>
    </source>
</evidence>
<evidence type="ECO:0000312" key="12">
    <source>
        <dbReference type="Proteomes" id="UP000001940"/>
    </source>
</evidence>
<evidence type="ECO:0000312" key="13">
    <source>
        <dbReference type="WormBase" id="F23B2.4"/>
    </source>
</evidence>
<feature type="chain" id="PRO_0000436568" description="Intraflagellar transport protein 122 homolog" evidence="9">
    <location>
        <begin position="1"/>
        <end position="1192"/>
    </location>
</feature>
<feature type="repeat" description="WD 1" evidence="2">
    <location>
        <begin position="17"/>
        <end position="57"/>
    </location>
</feature>
<feature type="repeat" description="WD 2" evidence="2">
    <location>
        <begin position="58"/>
        <end position="97"/>
    </location>
</feature>
<feature type="repeat" description="WD 3" evidence="2">
    <location>
        <begin position="99"/>
        <end position="136"/>
    </location>
</feature>
<feature type="repeat" description="WD 4" evidence="2">
    <location>
        <begin position="138"/>
        <end position="176"/>
    </location>
</feature>
<feature type="repeat" description="WD 5" evidence="2">
    <location>
        <begin position="236"/>
        <end position="275"/>
    </location>
</feature>
<feature type="repeat" description="WD 6" evidence="2">
    <location>
        <begin position="277"/>
        <end position="320"/>
    </location>
</feature>
<feature type="repeat" description="WD 7" evidence="2">
    <location>
        <begin position="475"/>
        <end position="513"/>
    </location>
</feature>
<accession>G5EFW7</accession>
<sequence>MRPNLLWVDKILDENNEAGVCIYDLAFKPDGSELLLAADNKVYLFDVNEGGQMQTLKGHKDLVYTVAWSHNGELFASGGADKLVILWNEKHEGTLRYSHTDVIQCMMFNPCNQILLTCALNEFGLWSTADKNVIKQRSVVRCCSCAWNTDGTIFAIGHGDGTITLRKGTNATEEPSIIIQRDNEPIWGIAFSSNRTFASRDSQGNPMGIDEIMAVIDWNKTLSFYSLDGTFIESKNLEFEPHCISYCLNGEYLLIGGSDKILKIYTRKGVLLGTVAQMDHWIWSVTVRPNSQTVAMGCVDGTIACYNLVFSTVHCVDHARYANRKSMTDVFVQNLEYRTSSNICCHDLVKKMSLYDTKLAVQLSDKIQIYKQTGGVSKNERRKQLKYTLQDTIRKDLSFSLMVVTHGHLVVCNDEKLECYDFKGIKKRSWNMKSIVRYLRVLGGPAHRETLVLGTTDGGVYKVFIDNDYPILLDSRKTAIKCIDINANRTVLASIEDTLVCKWSDIATGETLLQEPGCYSVVFNTVNENLFAFTTNNMLHVRTLAAPGHTTRGVGYVLGFVKNRTFCLVQYNLIPLEVPYTIHLYQYIERGDFKEALRIACLGVVKNDWKYLANKALDALEFDVARKAYKRVRDRKMLRMVWELKKMKSNGEPDAILRATILAYTKKFREAAKIFKENGFENRAMELFTDMRMFDDVQEVMTTASGETKKMLMRKRASWARDANQPKIAAEMLISSGDLDKAALLIIDNDWLELAIEISHKIDRSDLETMKKLSAYFIRKHEFGLASRIFQSINDMKSIVDMHVNAGHWTDAFAIADRHPKYVEDVYLPYARFLAERDRFEEAQKAFHRAGKEQEAMHVLEQLTSNSVNENRFADAGFYYWLLSQQYLDRSQTEENLTLLNKAKEAASLADAYYAYYPVFIFCSQPFSFERNENILNMARYLTFTPYIDNISKVFVYFTIAKIANEMGAYKSARTALDQLTNLRVLPQFELDGQIEVMTLNIRAKPFTDVESMQPMCYRCGLNNPLLGGMSCIHCETPFIISFVSFDILPLIEFKIENDISFDEAKELIESEPPLSDDDYNPLRGLKKGIKEIILNRESLSKLEQGHVIIQTFPPPLAPKFLFNVMPSITIAQCKGCNKVFDLDDFEMACLRKGHCPFCRTSYDRNEAFFVDEEEDEDNTNIPSFGQFSRFS</sequence>
<keyword id="KW-0966">Cell projection</keyword>
<keyword id="KW-0145">Chemotaxis</keyword>
<keyword id="KW-0969">Cilium</keyword>
<keyword id="KW-1185">Reference proteome</keyword>
<keyword id="KW-0677">Repeat</keyword>
<keyword id="KW-0813">Transport</keyword>
<keyword id="KW-0853">WD repeat</keyword>
<gene>
    <name evidence="13" type="primary">daf-10</name>
    <name evidence="13" type="ORF">F23B2.4</name>
</gene>
<protein>
    <recommendedName>
        <fullName evidence="1">Intraflagellar transport protein 122 homolog</fullName>
    </recommendedName>
    <alternativeName>
        <fullName evidence="13">Abnormal dauer formation protein 10</fullName>
    </alternativeName>
</protein>